<proteinExistence type="inferred from homology"/>
<keyword id="KW-0028">Amino-acid biosynthesis</keyword>
<keyword id="KW-0210">Decarboxylase</keyword>
<keyword id="KW-0456">Lyase</keyword>
<keyword id="KW-0457">Lysine biosynthesis</keyword>
<keyword id="KW-0663">Pyridoxal phosphate</keyword>
<keyword id="KW-1185">Reference proteome</keyword>
<comment type="function">
    <text evidence="2">Specifically catalyzes the decarboxylation of meso-diaminopimelate (meso-DAP) to L-lysine.</text>
</comment>
<comment type="catalytic activity">
    <reaction evidence="2">
        <text>meso-2,6-diaminopimelate + H(+) = L-lysine + CO2</text>
        <dbReference type="Rhea" id="RHEA:15101"/>
        <dbReference type="ChEBI" id="CHEBI:15378"/>
        <dbReference type="ChEBI" id="CHEBI:16526"/>
        <dbReference type="ChEBI" id="CHEBI:32551"/>
        <dbReference type="ChEBI" id="CHEBI:57791"/>
        <dbReference type="EC" id="4.1.1.20"/>
    </reaction>
</comment>
<comment type="cofactor">
    <cofactor evidence="2">
        <name>pyridoxal 5'-phosphate</name>
        <dbReference type="ChEBI" id="CHEBI:597326"/>
    </cofactor>
</comment>
<comment type="pathway">
    <text evidence="2">Amino-acid biosynthesis; L-lysine biosynthesis via DAP pathway; L-lysine from DL-2,6-diaminopimelate: step 1/1.</text>
</comment>
<comment type="subunit">
    <text evidence="2">Homodimer.</text>
</comment>
<comment type="similarity">
    <text evidence="2">Belongs to the Orn/Lys/Arg decarboxylase class-II family. LysA subfamily.</text>
</comment>
<dbReference type="EC" id="4.1.1.20" evidence="2"/>
<dbReference type="EMBL" id="BA000003">
    <property type="protein sequence ID" value="BAB13136.1"/>
    <property type="molecule type" value="Genomic_DNA"/>
</dbReference>
<dbReference type="RefSeq" id="NP_240250.1">
    <property type="nucleotide sequence ID" value="NC_002528.1"/>
</dbReference>
<dbReference type="RefSeq" id="WP_010896115.1">
    <property type="nucleotide sequence ID" value="NZ_AP036055.1"/>
</dbReference>
<dbReference type="SMR" id="P57513"/>
<dbReference type="STRING" id="563178.BUAP5A_431"/>
<dbReference type="EnsemblBacteria" id="BAB13136">
    <property type="protein sequence ID" value="BAB13136"/>
    <property type="gene ID" value="BAB13136"/>
</dbReference>
<dbReference type="KEGG" id="buc:BU438"/>
<dbReference type="PATRIC" id="fig|107806.10.peg.447"/>
<dbReference type="eggNOG" id="COG0019">
    <property type="taxonomic scope" value="Bacteria"/>
</dbReference>
<dbReference type="HOGENOM" id="CLU_026444_0_2_6"/>
<dbReference type="UniPathway" id="UPA00034">
    <property type="reaction ID" value="UER00027"/>
</dbReference>
<dbReference type="Proteomes" id="UP000001806">
    <property type="component" value="Chromosome"/>
</dbReference>
<dbReference type="GO" id="GO:0008836">
    <property type="term" value="F:diaminopimelate decarboxylase activity"/>
    <property type="evidence" value="ECO:0007669"/>
    <property type="project" value="UniProtKB-UniRule"/>
</dbReference>
<dbReference type="GO" id="GO:0030170">
    <property type="term" value="F:pyridoxal phosphate binding"/>
    <property type="evidence" value="ECO:0007669"/>
    <property type="project" value="UniProtKB-UniRule"/>
</dbReference>
<dbReference type="GO" id="GO:0009089">
    <property type="term" value="P:lysine biosynthetic process via diaminopimelate"/>
    <property type="evidence" value="ECO:0007669"/>
    <property type="project" value="UniProtKB-UniRule"/>
</dbReference>
<dbReference type="CDD" id="cd06828">
    <property type="entry name" value="PLPDE_III_DapDC"/>
    <property type="match status" value="1"/>
</dbReference>
<dbReference type="Gene3D" id="3.20.20.10">
    <property type="entry name" value="Alanine racemase"/>
    <property type="match status" value="1"/>
</dbReference>
<dbReference type="Gene3D" id="2.40.37.10">
    <property type="entry name" value="Lyase, Ornithine Decarboxylase, Chain A, domain 1"/>
    <property type="match status" value="1"/>
</dbReference>
<dbReference type="HAMAP" id="MF_02120">
    <property type="entry name" value="LysA"/>
    <property type="match status" value="1"/>
</dbReference>
<dbReference type="InterPro" id="IPR009006">
    <property type="entry name" value="Ala_racemase/Decarboxylase_C"/>
</dbReference>
<dbReference type="InterPro" id="IPR002986">
    <property type="entry name" value="DAP_deCOOHase_LysA"/>
</dbReference>
<dbReference type="InterPro" id="IPR022643">
    <property type="entry name" value="De-COase2_C"/>
</dbReference>
<dbReference type="InterPro" id="IPR022657">
    <property type="entry name" value="De-COase2_CS"/>
</dbReference>
<dbReference type="InterPro" id="IPR022644">
    <property type="entry name" value="De-COase2_N"/>
</dbReference>
<dbReference type="InterPro" id="IPR000183">
    <property type="entry name" value="Orn/DAP/Arg_de-COase"/>
</dbReference>
<dbReference type="InterPro" id="IPR029066">
    <property type="entry name" value="PLP-binding_barrel"/>
</dbReference>
<dbReference type="NCBIfam" id="TIGR01048">
    <property type="entry name" value="lysA"/>
    <property type="match status" value="1"/>
</dbReference>
<dbReference type="PANTHER" id="PTHR43727">
    <property type="entry name" value="DIAMINOPIMELATE DECARBOXYLASE"/>
    <property type="match status" value="1"/>
</dbReference>
<dbReference type="PANTHER" id="PTHR43727:SF2">
    <property type="entry name" value="GROUP IV DECARBOXYLASE"/>
    <property type="match status" value="1"/>
</dbReference>
<dbReference type="Pfam" id="PF02784">
    <property type="entry name" value="Orn_Arg_deC_N"/>
    <property type="match status" value="1"/>
</dbReference>
<dbReference type="Pfam" id="PF00278">
    <property type="entry name" value="Orn_DAP_Arg_deC"/>
    <property type="match status" value="1"/>
</dbReference>
<dbReference type="PRINTS" id="PR01181">
    <property type="entry name" value="DAPDCRBXLASE"/>
</dbReference>
<dbReference type="PRINTS" id="PR01179">
    <property type="entry name" value="ODADCRBXLASE"/>
</dbReference>
<dbReference type="SUPFAM" id="SSF50621">
    <property type="entry name" value="Alanine racemase C-terminal domain-like"/>
    <property type="match status" value="1"/>
</dbReference>
<dbReference type="SUPFAM" id="SSF51419">
    <property type="entry name" value="PLP-binding barrel"/>
    <property type="match status" value="1"/>
</dbReference>
<dbReference type="PROSITE" id="PS00879">
    <property type="entry name" value="ODR_DC_2_2"/>
    <property type="match status" value="1"/>
</dbReference>
<organism>
    <name type="scientific">Buchnera aphidicola subsp. Acyrthosiphon pisum (strain APS)</name>
    <name type="common">Acyrthosiphon pisum symbiotic bacterium</name>
    <dbReference type="NCBI Taxonomy" id="107806"/>
    <lineage>
        <taxon>Bacteria</taxon>
        <taxon>Pseudomonadati</taxon>
        <taxon>Pseudomonadota</taxon>
        <taxon>Gammaproteobacteria</taxon>
        <taxon>Enterobacterales</taxon>
        <taxon>Erwiniaceae</taxon>
        <taxon>Buchnera</taxon>
    </lineage>
</organism>
<evidence type="ECO:0000255" key="1"/>
<evidence type="ECO:0000255" key="2">
    <source>
        <dbReference type="HAMAP-Rule" id="MF_02120"/>
    </source>
</evidence>
<protein>
    <recommendedName>
        <fullName evidence="2">Diaminopimelate decarboxylase</fullName>
        <shortName evidence="2">DAP decarboxylase</shortName>
        <shortName evidence="2">DAPDC</shortName>
        <ecNumber evidence="2">4.1.1.20</ecNumber>
    </recommendedName>
</protein>
<sequence>MPKPLNNTENNLNTNRIKDLIKKYSPPFWVYDADIIYKKINLLRKFDVIRFAQKSCSNINILRLMKNKNVKIDAVSLGEIERALLSGFKPSTNEIIFTADILDEETLLKVAKYKIPVNAGSLDMLKQLGKISPGHHVWLRINPRFGYGHSKKTNTGGENSKHGIWHPEQAIPIIKKYKLKLIGLHMHIGSGVNYLHLKKVSQAMIKYAFQLNQKISSISVGGGLPIPYKFNDQPIDIKKYFMLWDIARKKISKFLGEKIELEIEPGRFLVAESGILISKVWATKKMGNKNFVLVDVGFNDLMRPTMYGSYHHISVIYGDDRKMNEKETIDTVVAGPLCESGDIFTQKEGGTVQTRKLPTIKVGDYLIFHDTGAYGAAMSSNYNTRPLIPEILLKNNDSIVIRRRQTIEEILNLEK</sequence>
<feature type="chain" id="PRO_0000149916" description="Diaminopimelate decarboxylase">
    <location>
        <begin position="1"/>
        <end position="415"/>
    </location>
</feature>
<feature type="active site" description="Proton donor" evidence="1">
    <location>
        <position position="338"/>
    </location>
</feature>
<feature type="binding site" evidence="2">
    <location>
        <position position="223"/>
    </location>
    <ligand>
        <name>pyridoxal 5'-phosphate</name>
        <dbReference type="ChEBI" id="CHEBI:597326"/>
    </ligand>
</feature>
<feature type="binding site" evidence="2">
    <location>
        <begin position="264"/>
        <end position="267"/>
    </location>
    <ligand>
        <name>pyridoxal 5'-phosphate</name>
        <dbReference type="ChEBI" id="CHEBI:597326"/>
    </ligand>
</feature>
<feature type="binding site" evidence="2">
    <location>
        <position position="267"/>
    </location>
    <ligand>
        <name>substrate</name>
    </ligand>
</feature>
<feature type="binding site" evidence="2">
    <location>
        <position position="303"/>
    </location>
    <ligand>
        <name>substrate</name>
    </ligand>
</feature>
<feature type="binding site" evidence="2">
    <location>
        <position position="307"/>
    </location>
    <ligand>
        <name>substrate</name>
    </ligand>
</feature>
<feature type="binding site" evidence="2">
    <location>
        <position position="339"/>
    </location>
    <ligand>
        <name>substrate</name>
    </ligand>
</feature>
<feature type="binding site" evidence="2">
    <location>
        <position position="374"/>
    </location>
    <ligand>
        <name>pyridoxal 5'-phosphate</name>
        <dbReference type="ChEBI" id="CHEBI:597326"/>
    </ligand>
</feature>
<feature type="binding site" evidence="2">
    <location>
        <position position="374"/>
    </location>
    <ligand>
        <name>substrate</name>
    </ligand>
</feature>
<feature type="modified residue" description="N6-(pyridoxal phosphate)lysine" evidence="2">
    <location>
        <position position="54"/>
    </location>
</feature>
<accession>P57513</accession>
<reference key="1">
    <citation type="journal article" date="2000" name="Nature">
        <title>Genome sequence of the endocellular bacterial symbiont of aphids Buchnera sp. APS.</title>
        <authorList>
            <person name="Shigenobu S."/>
            <person name="Watanabe H."/>
            <person name="Hattori M."/>
            <person name="Sakaki Y."/>
            <person name="Ishikawa H."/>
        </authorList>
    </citation>
    <scope>NUCLEOTIDE SEQUENCE [LARGE SCALE GENOMIC DNA]</scope>
    <source>
        <strain>APS</strain>
    </source>
</reference>
<gene>
    <name evidence="2" type="primary">lysA</name>
    <name type="ordered locus">BU438</name>
</gene>
<name>DCDA_BUCAI</name>